<keyword id="KW-0175">Coiled coil</keyword>
<keyword id="KW-1185">Reference proteome</keyword>
<gene>
    <name type="primary">cdr2l</name>
    <name type="ORF">zgc:77462</name>
</gene>
<organism>
    <name type="scientific">Danio rerio</name>
    <name type="common">Zebrafish</name>
    <name type="synonym">Brachydanio rerio</name>
    <dbReference type="NCBI Taxonomy" id="7955"/>
    <lineage>
        <taxon>Eukaryota</taxon>
        <taxon>Metazoa</taxon>
        <taxon>Chordata</taxon>
        <taxon>Craniata</taxon>
        <taxon>Vertebrata</taxon>
        <taxon>Euteleostomi</taxon>
        <taxon>Actinopterygii</taxon>
        <taxon>Neopterygii</taxon>
        <taxon>Teleostei</taxon>
        <taxon>Ostariophysi</taxon>
        <taxon>Cypriniformes</taxon>
        <taxon>Danionidae</taxon>
        <taxon>Danioninae</taxon>
        <taxon>Danio</taxon>
    </lineage>
</organism>
<proteinExistence type="evidence at transcript level"/>
<accession>Q6NZT2</accession>
<feature type="chain" id="PRO_0000307236" description="Cerebellar degeneration-related protein 2-like">
    <location>
        <begin position="1"/>
        <end position="464"/>
    </location>
</feature>
<feature type="region of interest" description="Disordered" evidence="2">
    <location>
        <begin position="371"/>
        <end position="419"/>
    </location>
</feature>
<feature type="coiled-coil region" evidence="1">
    <location>
        <begin position="31"/>
        <end position="154"/>
    </location>
</feature>
<feature type="coiled-coil region" evidence="1">
    <location>
        <begin position="201"/>
        <end position="264"/>
    </location>
</feature>
<feature type="coiled-coil region" evidence="1">
    <location>
        <begin position="342"/>
        <end position="379"/>
    </location>
</feature>
<feature type="compositionally biased region" description="Basic and acidic residues" evidence="2">
    <location>
        <begin position="384"/>
        <end position="395"/>
    </location>
</feature>
<feature type="compositionally biased region" description="Pro residues" evidence="2">
    <location>
        <begin position="399"/>
        <end position="409"/>
    </location>
</feature>
<protein>
    <recommendedName>
        <fullName>Cerebellar degeneration-related protein 2-like</fullName>
    </recommendedName>
</protein>
<reference key="1">
    <citation type="submission" date="2004-02" db="EMBL/GenBank/DDBJ databases">
        <authorList>
            <consortium name="NIH - Zebrafish Gene Collection (ZGC) project"/>
        </authorList>
    </citation>
    <scope>NUCLEOTIDE SEQUENCE [LARGE SCALE MRNA]</scope>
    <source>
        <tissue>Embryo</tissue>
    </source>
</reference>
<comment type="similarity">
    <text evidence="3">Belongs to the CDR2 family.</text>
</comment>
<comment type="sequence caution" evidence="3">
    <conflict type="erroneous initiation">
        <sequence resource="EMBL-CDS" id="AAH65979"/>
    </conflict>
</comment>
<sequence>MLRAGRMDEFVTEEDEPWYDQRDLEQDLHLAAELGKTLLERNKELEDSLQQMYINNEEQVQEIEYLTKQMEMLREMNEQHAKVYEQLDVTARELEITNEKLVLESKGSQQKIDRLTGTMEMLQGQVDTLTARVEELRTLEELRVRREKKERRKTVHSFPCLKELCTAPRYEDSFMVSDPGSGDLEECQPADEENEHLRVMVSSLRAAVAAERGRREAAERECAAVLQEFERLEQRLLGAESCQRRVHELEAELQEMQQLRKSRVCLLSGEEGLEQTLLNCAPETDTPDEAVMAQNGDANDGAAPVRKSCSDTALDAISAVDASGRRKGSYALHANGVRKRGMSILREVDEQYHALLEKYEELLGKCRRHEESLRHAEVQTSRPVSRDPSMKECRVAEPQQPPPTPPQTPSTPEALEGISRQVEAVDKRLSQNTPEYKALFKEIFSRLQRTKSDINSTKGRKGGK</sequence>
<evidence type="ECO:0000255" key="1"/>
<evidence type="ECO:0000256" key="2">
    <source>
        <dbReference type="SAM" id="MobiDB-lite"/>
    </source>
</evidence>
<evidence type="ECO:0000305" key="3"/>
<name>CDR2L_DANRE</name>
<dbReference type="EMBL" id="BC065979">
    <property type="protein sequence ID" value="AAH65979.1"/>
    <property type="status" value="ALT_INIT"/>
    <property type="molecule type" value="mRNA"/>
</dbReference>
<dbReference type="RefSeq" id="NP_001303823.1">
    <property type="nucleotide sequence ID" value="NM_001316894.1"/>
</dbReference>
<dbReference type="RefSeq" id="NP_991127.2">
    <property type="nucleotide sequence ID" value="NM_205564.2"/>
</dbReference>
<dbReference type="RefSeq" id="XP_021325382.1">
    <property type="nucleotide sequence ID" value="XM_021469707.2"/>
</dbReference>
<dbReference type="RefSeq" id="XP_021325383.1">
    <property type="nucleotide sequence ID" value="XM_021469708.2"/>
</dbReference>
<dbReference type="RefSeq" id="XP_068072100.1">
    <property type="nucleotide sequence ID" value="XM_068215999.1"/>
</dbReference>
<dbReference type="SMR" id="Q6NZT2"/>
<dbReference type="FunCoup" id="Q6NZT2">
    <property type="interactions" value="455"/>
</dbReference>
<dbReference type="PaxDb" id="7955-ENSDARP00000105648"/>
<dbReference type="Ensembl" id="ENSDART00000035878">
    <property type="protein sequence ID" value="ENSDARP00000035047"/>
    <property type="gene ID" value="ENSDARG00000026834"/>
</dbReference>
<dbReference type="Ensembl" id="ENSDART00000124038">
    <property type="protein sequence ID" value="ENSDARP00000106075"/>
    <property type="gene ID" value="ENSDARG00000026834"/>
</dbReference>
<dbReference type="Ensembl" id="ENSDART00000128790">
    <property type="protein sequence ID" value="ENSDARP00000105648"/>
    <property type="gene ID" value="ENSDARG00000026834"/>
</dbReference>
<dbReference type="GeneID" id="336227"/>
<dbReference type="KEGG" id="dre:336227"/>
<dbReference type="AGR" id="ZFIN:ZDB-GENE-030131-8171"/>
<dbReference type="CTD" id="30850"/>
<dbReference type="ZFIN" id="ZDB-GENE-030131-8171">
    <property type="gene designation" value="cdr2l"/>
</dbReference>
<dbReference type="eggNOG" id="ENOG502QRN3">
    <property type="taxonomic scope" value="Eukaryota"/>
</dbReference>
<dbReference type="HOGENOM" id="CLU_048751_0_0_1"/>
<dbReference type="InParanoid" id="Q6NZT2"/>
<dbReference type="OMA" id="MKEYSMA"/>
<dbReference type="OrthoDB" id="10059415at2759"/>
<dbReference type="PhylomeDB" id="Q6NZT2"/>
<dbReference type="PRO" id="PR:Q6NZT2"/>
<dbReference type="Proteomes" id="UP000000437">
    <property type="component" value="Chromosome 3"/>
</dbReference>
<dbReference type="Bgee" id="ENSDARG00000026834">
    <property type="expression patterns" value="Expressed in testis and 35 other cell types or tissues"/>
</dbReference>
<dbReference type="ExpressionAtlas" id="Q6NZT2">
    <property type="expression patterns" value="baseline and differential"/>
</dbReference>
<dbReference type="InterPro" id="IPR026079">
    <property type="entry name" value="CDR2"/>
</dbReference>
<dbReference type="PANTHER" id="PTHR19232">
    <property type="entry name" value="CENTROCORTIN FAMILY MEMBER"/>
    <property type="match status" value="1"/>
</dbReference>
<dbReference type="PANTHER" id="PTHR19232:SF10">
    <property type="entry name" value="CEREBELLAR DEGENERATION-RELATED PROTEIN 2-LIKE"/>
    <property type="match status" value="1"/>
</dbReference>